<evidence type="ECO:0000255" key="1">
    <source>
        <dbReference type="HAMAP-Rule" id="MF_00711"/>
    </source>
</evidence>
<comment type="function">
    <text evidence="1">The glycine cleavage system catalyzes the degradation of glycine. The P protein binds the alpha-amino group of glycine through its pyridoxal phosphate cofactor; CO(2) is released and the remaining methylamine moiety is then transferred to the lipoamide cofactor of the H protein.</text>
</comment>
<comment type="catalytic activity">
    <reaction evidence="1">
        <text>N(6)-[(R)-lipoyl]-L-lysyl-[glycine-cleavage complex H protein] + glycine + H(+) = N(6)-[(R)-S(8)-aminomethyldihydrolipoyl]-L-lysyl-[glycine-cleavage complex H protein] + CO2</text>
        <dbReference type="Rhea" id="RHEA:24304"/>
        <dbReference type="Rhea" id="RHEA-COMP:10494"/>
        <dbReference type="Rhea" id="RHEA-COMP:10495"/>
        <dbReference type="ChEBI" id="CHEBI:15378"/>
        <dbReference type="ChEBI" id="CHEBI:16526"/>
        <dbReference type="ChEBI" id="CHEBI:57305"/>
        <dbReference type="ChEBI" id="CHEBI:83099"/>
        <dbReference type="ChEBI" id="CHEBI:83143"/>
        <dbReference type="EC" id="1.4.4.2"/>
    </reaction>
</comment>
<comment type="cofactor">
    <cofactor evidence="1">
        <name>pyridoxal 5'-phosphate</name>
        <dbReference type="ChEBI" id="CHEBI:597326"/>
    </cofactor>
</comment>
<comment type="subunit">
    <text evidence="1">The glycine cleavage system is composed of four proteins: P, T, L and H.</text>
</comment>
<comment type="similarity">
    <text evidence="1">Belongs to the GcvP family.</text>
</comment>
<reference key="1">
    <citation type="journal article" date="2011" name="J. Bacteriol.">
        <title>Comparative genomics of 28 Salmonella enterica isolates: evidence for CRISPR-mediated adaptive sublineage evolution.</title>
        <authorList>
            <person name="Fricke W.F."/>
            <person name="Mammel M.K."/>
            <person name="McDermott P.F."/>
            <person name="Tartera C."/>
            <person name="White D.G."/>
            <person name="Leclerc J.E."/>
            <person name="Ravel J."/>
            <person name="Cebula T.A."/>
        </authorList>
    </citation>
    <scope>NUCLEOTIDE SEQUENCE [LARGE SCALE GENOMIC DNA]</scope>
    <source>
        <strain>SL476</strain>
    </source>
</reference>
<sequence length="957" mass="104259">MTQTLSQLENRGAFIERHIGPDAAQQQEMLNAVGAESLNALTGQIVPKDIQLATPPQVGEAATEYAALAELKAIAGRNKRFTSYIGMGYTAVQLPPVILRNMLENPGWYTAYTPYQPEVSQGRLEALLNFQQVTLDLTGLDMASASLLDEATAAAEAMAMAKRVSKLKNANRFFVASDVHPQTLDVVRTRAETFGFDVIVDDAAKALDHQDVFGVLLQQVGTTGEIHDYSALITELKSRKVVVSVAADFMALVLLMAPGKQGADIVFGSAQRFGVPMGYGGPHAAFFAAKDEFKRSMPGRIIGVSKDAAGNTALRMAMQTREQHIRREKANSNICTSQVLLANIASLYAVYHGPVGLKRIANRIHRLTDILAAGLQQKGLKLRHAHYFDTLCVEVADKAAVLARAEAAEINLRSDIHNAVGITLDETTTRENVAQLFNVLLGGSHGLNIETLDKDVALDSRSIQQSMLRDDAILTHPVFNRYHSETEMMRYMHSLERKDLALNQAMIPLGSCTMKLNAAAEMIPITWPEFAELHPFCPPEQAEGYHQMISQLSDWLVKLTGYDAVCMQPNSGAQGEYAGLLAIRHYHESRNEGHRDICLIPASAHGTNPASAHMAGMQVVVVACDKNGNIDLDDLRAKAEQHAANLSCIMVTYPSTHGVYEETIREVCEVVHQFGGQVYLDGANMNAQVGITSPGFIGADVSHLNLHKTFCIPHGGGGPGMGPIGVKAHLAPFVPGHSVVQIEGMLTRQGAVSAAPFGSASILPISWMYIRMMGAEGLKQASQVAILNANYIASRLKDAYPVLYTGRDGRVAHECILDIRPLKEETGISELDIAKRLIDYGFHAPTMSFPVAGTLMVEPTESEGKAELDRFIDAMLAIRAEIDQVKAGVWPLEDNPLVNAPHIQSELVAEWAHPYSREVAVFPAGVADKYWPTVKRLDDVYGDRNLFCSCVPISDYQ</sequence>
<feature type="chain" id="PRO_1000132454" description="Glycine dehydrogenase (decarboxylating)">
    <location>
        <begin position="1"/>
        <end position="957"/>
    </location>
</feature>
<feature type="modified residue" description="N6-(pyridoxal phosphate)lysine" evidence="1">
    <location>
        <position position="708"/>
    </location>
</feature>
<protein>
    <recommendedName>
        <fullName evidence="1">Glycine dehydrogenase (decarboxylating)</fullName>
        <ecNumber evidence="1">1.4.4.2</ecNumber>
    </recommendedName>
    <alternativeName>
        <fullName evidence="1">Glycine cleavage system P-protein</fullName>
    </alternativeName>
    <alternativeName>
        <fullName evidence="1">Glycine decarboxylase</fullName>
    </alternativeName>
    <alternativeName>
        <fullName evidence="1">Glycine dehydrogenase (aminomethyl-transferring)</fullName>
    </alternativeName>
</protein>
<gene>
    <name evidence="1" type="primary">gcvP</name>
    <name type="ordered locus">SeHA_C3285</name>
</gene>
<accession>B4TGX3</accession>
<proteinExistence type="inferred from homology"/>
<organism>
    <name type="scientific">Salmonella heidelberg (strain SL476)</name>
    <dbReference type="NCBI Taxonomy" id="454169"/>
    <lineage>
        <taxon>Bacteria</taxon>
        <taxon>Pseudomonadati</taxon>
        <taxon>Pseudomonadota</taxon>
        <taxon>Gammaproteobacteria</taxon>
        <taxon>Enterobacterales</taxon>
        <taxon>Enterobacteriaceae</taxon>
        <taxon>Salmonella</taxon>
    </lineage>
</organism>
<dbReference type="EC" id="1.4.4.2" evidence="1"/>
<dbReference type="EMBL" id="CP001120">
    <property type="protein sequence ID" value="ACF67206.1"/>
    <property type="molecule type" value="Genomic_DNA"/>
</dbReference>
<dbReference type="RefSeq" id="WP_000194972.1">
    <property type="nucleotide sequence ID" value="NC_011083.1"/>
</dbReference>
<dbReference type="SMR" id="B4TGX3"/>
<dbReference type="KEGG" id="seh:SeHA_C3285"/>
<dbReference type="HOGENOM" id="CLU_004620_3_2_6"/>
<dbReference type="Proteomes" id="UP000001866">
    <property type="component" value="Chromosome"/>
</dbReference>
<dbReference type="GO" id="GO:0005829">
    <property type="term" value="C:cytosol"/>
    <property type="evidence" value="ECO:0007669"/>
    <property type="project" value="TreeGrafter"/>
</dbReference>
<dbReference type="GO" id="GO:0005960">
    <property type="term" value="C:glycine cleavage complex"/>
    <property type="evidence" value="ECO:0007669"/>
    <property type="project" value="TreeGrafter"/>
</dbReference>
<dbReference type="GO" id="GO:0016594">
    <property type="term" value="F:glycine binding"/>
    <property type="evidence" value="ECO:0007669"/>
    <property type="project" value="TreeGrafter"/>
</dbReference>
<dbReference type="GO" id="GO:0004375">
    <property type="term" value="F:glycine dehydrogenase (decarboxylating) activity"/>
    <property type="evidence" value="ECO:0007669"/>
    <property type="project" value="UniProtKB-EC"/>
</dbReference>
<dbReference type="GO" id="GO:0030170">
    <property type="term" value="F:pyridoxal phosphate binding"/>
    <property type="evidence" value="ECO:0007669"/>
    <property type="project" value="TreeGrafter"/>
</dbReference>
<dbReference type="GO" id="GO:0019464">
    <property type="term" value="P:glycine decarboxylation via glycine cleavage system"/>
    <property type="evidence" value="ECO:0007669"/>
    <property type="project" value="UniProtKB-UniRule"/>
</dbReference>
<dbReference type="CDD" id="cd00613">
    <property type="entry name" value="GDC-P"/>
    <property type="match status" value="2"/>
</dbReference>
<dbReference type="FunFam" id="3.40.640.10:FF:000005">
    <property type="entry name" value="Glycine dehydrogenase (decarboxylating), mitochondrial"/>
    <property type="match status" value="1"/>
</dbReference>
<dbReference type="FunFam" id="3.90.1150.10:FF:000007">
    <property type="entry name" value="Glycine dehydrogenase (decarboxylating), mitochondrial"/>
    <property type="match status" value="1"/>
</dbReference>
<dbReference type="FunFam" id="3.40.640.10:FF:000007">
    <property type="entry name" value="glycine dehydrogenase (Decarboxylating), mitochondrial"/>
    <property type="match status" value="1"/>
</dbReference>
<dbReference type="Gene3D" id="3.90.1150.10">
    <property type="entry name" value="Aspartate Aminotransferase, domain 1"/>
    <property type="match status" value="1"/>
</dbReference>
<dbReference type="Gene3D" id="3.40.640.10">
    <property type="entry name" value="Type I PLP-dependent aspartate aminotransferase-like (Major domain)"/>
    <property type="match status" value="2"/>
</dbReference>
<dbReference type="HAMAP" id="MF_00711">
    <property type="entry name" value="GcvP"/>
    <property type="match status" value="1"/>
</dbReference>
<dbReference type="InterPro" id="IPR003437">
    <property type="entry name" value="GcvP"/>
</dbReference>
<dbReference type="InterPro" id="IPR049316">
    <property type="entry name" value="GDC-P_C"/>
</dbReference>
<dbReference type="InterPro" id="IPR049315">
    <property type="entry name" value="GDC-P_N"/>
</dbReference>
<dbReference type="InterPro" id="IPR020581">
    <property type="entry name" value="GDC_P"/>
</dbReference>
<dbReference type="InterPro" id="IPR015424">
    <property type="entry name" value="PyrdxlP-dep_Trfase"/>
</dbReference>
<dbReference type="InterPro" id="IPR015421">
    <property type="entry name" value="PyrdxlP-dep_Trfase_major"/>
</dbReference>
<dbReference type="InterPro" id="IPR015422">
    <property type="entry name" value="PyrdxlP-dep_Trfase_small"/>
</dbReference>
<dbReference type="NCBIfam" id="TIGR00461">
    <property type="entry name" value="gcvP"/>
    <property type="match status" value="1"/>
</dbReference>
<dbReference type="NCBIfam" id="NF003346">
    <property type="entry name" value="PRK04366.1"/>
    <property type="match status" value="1"/>
</dbReference>
<dbReference type="PANTHER" id="PTHR11773:SF13">
    <property type="entry name" value="GLYCINE DEHYDROGENASE (DECARBOXYLATING)"/>
    <property type="match status" value="1"/>
</dbReference>
<dbReference type="PANTHER" id="PTHR11773">
    <property type="entry name" value="GLYCINE DEHYDROGENASE, DECARBOXYLATING"/>
    <property type="match status" value="1"/>
</dbReference>
<dbReference type="Pfam" id="PF21478">
    <property type="entry name" value="GcvP2_C"/>
    <property type="match status" value="1"/>
</dbReference>
<dbReference type="Pfam" id="PF02347">
    <property type="entry name" value="GDC-P"/>
    <property type="match status" value="2"/>
</dbReference>
<dbReference type="SUPFAM" id="SSF53383">
    <property type="entry name" value="PLP-dependent transferases"/>
    <property type="match status" value="2"/>
</dbReference>
<keyword id="KW-0560">Oxidoreductase</keyword>
<keyword id="KW-0663">Pyridoxal phosphate</keyword>
<name>GCSP_SALHS</name>